<protein>
    <recommendedName>
        <fullName evidence="1">Glucose-6-phosphate isomerase</fullName>
        <shortName evidence="1">GPI</shortName>
        <ecNumber evidence="1">5.3.1.9</ecNumber>
    </recommendedName>
    <alternativeName>
        <fullName evidence="1">Phosphoglucose isomerase</fullName>
        <shortName evidence="1">PGI</shortName>
    </alternativeName>
    <alternativeName>
        <fullName evidence="1">Phosphohexose isomerase</fullName>
        <shortName evidence="1">PHI</shortName>
    </alternativeName>
</protein>
<feature type="chain" id="PRO_1000125690" description="Glucose-6-phosphate isomerase">
    <location>
        <begin position="1"/>
        <end position="546"/>
    </location>
</feature>
<feature type="active site" description="Proton donor" evidence="1">
    <location>
        <position position="357"/>
    </location>
</feature>
<feature type="active site" evidence="1">
    <location>
        <position position="389"/>
    </location>
</feature>
<feature type="active site" evidence="1">
    <location>
        <position position="509"/>
    </location>
</feature>
<name>G6PI_ANASK</name>
<dbReference type="EC" id="5.3.1.9" evidence="1"/>
<dbReference type="EMBL" id="CP001131">
    <property type="protein sequence ID" value="ACG74399.1"/>
    <property type="molecule type" value="Genomic_DNA"/>
</dbReference>
<dbReference type="RefSeq" id="WP_012527173.1">
    <property type="nucleotide sequence ID" value="NC_011145.1"/>
</dbReference>
<dbReference type="SMR" id="B4ULW4"/>
<dbReference type="KEGG" id="ank:AnaeK_3178"/>
<dbReference type="HOGENOM" id="CLU_017947_3_1_7"/>
<dbReference type="OrthoDB" id="140919at2"/>
<dbReference type="UniPathway" id="UPA00109">
    <property type="reaction ID" value="UER00181"/>
</dbReference>
<dbReference type="UniPathway" id="UPA00138"/>
<dbReference type="Proteomes" id="UP000001871">
    <property type="component" value="Chromosome"/>
</dbReference>
<dbReference type="GO" id="GO:0005829">
    <property type="term" value="C:cytosol"/>
    <property type="evidence" value="ECO:0007669"/>
    <property type="project" value="TreeGrafter"/>
</dbReference>
<dbReference type="GO" id="GO:0097367">
    <property type="term" value="F:carbohydrate derivative binding"/>
    <property type="evidence" value="ECO:0007669"/>
    <property type="project" value="InterPro"/>
</dbReference>
<dbReference type="GO" id="GO:0004347">
    <property type="term" value="F:glucose-6-phosphate isomerase activity"/>
    <property type="evidence" value="ECO:0007669"/>
    <property type="project" value="UniProtKB-UniRule"/>
</dbReference>
<dbReference type="GO" id="GO:0048029">
    <property type="term" value="F:monosaccharide binding"/>
    <property type="evidence" value="ECO:0007669"/>
    <property type="project" value="TreeGrafter"/>
</dbReference>
<dbReference type="GO" id="GO:0006094">
    <property type="term" value="P:gluconeogenesis"/>
    <property type="evidence" value="ECO:0007669"/>
    <property type="project" value="UniProtKB-UniRule"/>
</dbReference>
<dbReference type="GO" id="GO:0051156">
    <property type="term" value="P:glucose 6-phosphate metabolic process"/>
    <property type="evidence" value="ECO:0007669"/>
    <property type="project" value="TreeGrafter"/>
</dbReference>
<dbReference type="GO" id="GO:0006096">
    <property type="term" value="P:glycolytic process"/>
    <property type="evidence" value="ECO:0007669"/>
    <property type="project" value="UniProtKB-UniRule"/>
</dbReference>
<dbReference type="CDD" id="cd05015">
    <property type="entry name" value="SIS_PGI_1"/>
    <property type="match status" value="1"/>
</dbReference>
<dbReference type="CDD" id="cd05016">
    <property type="entry name" value="SIS_PGI_2"/>
    <property type="match status" value="1"/>
</dbReference>
<dbReference type="FunFam" id="1.10.1390.10:FF:000001">
    <property type="entry name" value="Glucose-6-phosphate isomerase"/>
    <property type="match status" value="1"/>
</dbReference>
<dbReference type="FunFam" id="3.40.50.10490:FF:000018">
    <property type="entry name" value="Glucose-6-phosphate isomerase"/>
    <property type="match status" value="1"/>
</dbReference>
<dbReference type="Gene3D" id="1.10.1390.10">
    <property type="match status" value="1"/>
</dbReference>
<dbReference type="Gene3D" id="3.40.50.10490">
    <property type="entry name" value="Glucose-6-phosphate isomerase like protein, domain 1"/>
    <property type="match status" value="2"/>
</dbReference>
<dbReference type="HAMAP" id="MF_00473">
    <property type="entry name" value="G6P_isomerase"/>
    <property type="match status" value="1"/>
</dbReference>
<dbReference type="InterPro" id="IPR001672">
    <property type="entry name" value="G6P_Isomerase"/>
</dbReference>
<dbReference type="InterPro" id="IPR023096">
    <property type="entry name" value="G6P_Isomerase_C"/>
</dbReference>
<dbReference type="InterPro" id="IPR018189">
    <property type="entry name" value="Phosphoglucose_isomerase_CS"/>
</dbReference>
<dbReference type="InterPro" id="IPR046348">
    <property type="entry name" value="SIS_dom_sf"/>
</dbReference>
<dbReference type="InterPro" id="IPR035476">
    <property type="entry name" value="SIS_PGI_1"/>
</dbReference>
<dbReference type="InterPro" id="IPR035482">
    <property type="entry name" value="SIS_PGI_2"/>
</dbReference>
<dbReference type="NCBIfam" id="NF001211">
    <property type="entry name" value="PRK00179.1"/>
    <property type="match status" value="1"/>
</dbReference>
<dbReference type="PANTHER" id="PTHR11469">
    <property type="entry name" value="GLUCOSE-6-PHOSPHATE ISOMERASE"/>
    <property type="match status" value="1"/>
</dbReference>
<dbReference type="PANTHER" id="PTHR11469:SF1">
    <property type="entry name" value="GLUCOSE-6-PHOSPHATE ISOMERASE"/>
    <property type="match status" value="1"/>
</dbReference>
<dbReference type="Pfam" id="PF00342">
    <property type="entry name" value="PGI"/>
    <property type="match status" value="1"/>
</dbReference>
<dbReference type="PRINTS" id="PR00662">
    <property type="entry name" value="G6PISOMERASE"/>
</dbReference>
<dbReference type="SUPFAM" id="SSF53697">
    <property type="entry name" value="SIS domain"/>
    <property type="match status" value="1"/>
</dbReference>
<dbReference type="PROSITE" id="PS00765">
    <property type="entry name" value="P_GLUCOSE_ISOMERASE_1"/>
    <property type="match status" value="1"/>
</dbReference>
<dbReference type="PROSITE" id="PS00174">
    <property type="entry name" value="P_GLUCOSE_ISOMERASE_2"/>
    <property type="match status" value="1"/>
</dbReference>
<dbReference type="PROSITE" id="PS51463">
    <property type="entry name" value="P_GLUCOSE_ISOMERASE_3"/>
    <property type="match status" value="1"/>
</dbReference>
<evidence type="ECO:0000255" key="1">
    <source>
        <dbReference type="HAMAP-Rule" id="MF_00473"/>
    </source>
</evidence>
<sequence length="546" mass="59715">MPDRTGPLLRTPAWRALEAHLAELQPLHLRELFARDPGRGERLVADGAGLHLDYSKQRVTEETVRLLAALAEARGLPERRAAMFRGEKVNVTEGRAVLHVALRAPRGERILVDGSDVVPEVHAVLDRMAAFADQVRSGAWTGFTGKRIRTVVNVGIGGSDLGPAMAYRALRAYATRDLAFRFVSNVDGTDLAEAVRDLDPAETLFLVASKTFTTLETMTNAASARSWLLAALGDPRAVARHFVAISTNEAEVRRFGIDPANMFGFWDWVGGRYSMDSAIGLSTMIAVGPEGFRELLAGFREMDEHFRDAPLERNLPALIGLLGVWNANLLGAETVAVLPYDQYLDRFPAYLQQLTMESNGKRVTASGAPVEGHGTGAIYWGEPGTNGQHSFYQLLHQGTHLVACDFIGFCRPLHALARHHDLLMANLFAQGEALAFGKTAEEARAEGTPEPLVPHRTFPGNRPSSTILADRLTPRTLGALVALYEHAVFTQGVIWDVDSFDQWGVELGKVLANRIVKELESPAEPALAHDGSTNALIRRYRARRGG</sequence>
<organism>
    <name type="scientific">Anaeromyxobacter sp. (strain K)</name>
    <dbReference type="NCBI Taxonomy" id="447217"/>
    <lineage>
        <taxon>Bacteria</taxon>
        <taxon>Pseudomonadati</taxon>
        <taxon>Myxococcota</taxon>
        <taxon>Myxococcia</taxon>
        <taxon>Myxococcales</taxon>
        <taxon>Cystobacterineae</taxon>
        <taxon>Anaeromyxobacteraceae</taxon>
        <taxon>Anaeromyxobacter</taxon>
    </lineage>
</organism>
<proteinExistence type="inferred from homology"/>
<accession>B4ULW4</accession>
<reference key="1">
    <citation type="submission" date="2008-08" db="EMBL/GenBank/DDBJ databases">
        <title>Complete sequence of Anaeromyxobacter sp. K.</title>
        <authorList>
            <consortium name="US DOE Joint Genome Institute"/>
            <person name="Lucas S."/>
            <person name="Copeland A."/>
            <person name="Lapidus A."/>
            <person name="Glavina del Rio T."/>
            <person name="Dalin E."/>
            <person name="Tice H."/>
            <person name="Bruce D."/>
            <person name="Goodwin L."/>
            <person name="Pitluck S."/>
            <person name="Saunders E."/>
            <person name="Brettin T."/>
            <person name="Detter J.C."/>
            <person name="Han C."/>
            <person name="Larimer F."/>
            <person name="Land M."/>
            <person name="Hauser L."/>
            <person name="Kyrpides N."/>
            <person name="Ovchinnikiva G."/>
            <person name="Beliaev A."/>
        </authorList>
    </citation>
    <scope>NUCLEOTIDE SEQUENCE [LARGE SCALE GENOMIC DNA]</scope>
    <source>
        <strain>K</strain>
    </source>
</reference>
<keyword id="KW-0963">Cytoplasm</keyword>
<keyword id="KW-0312">Gluconeogenesis</keyword>
<keyword id="KW-0324">Glycolysis</keyword>
<keyword id="KW-0413">Isomerase</keyword>
<gene>
    <name evidence="1" type="primary">pgi</name>
    <name type="ordered locus">AnaeK_3178</name>
</gene>
<comment type="function">
    <text evidence="1">Catalyzes the reversible isomerization of glucose-6-phosphate to fructose-6-phosphate.</text>
</comment>
<comment type="catalytic activity">
    <reaction evidence="1">
        <text>alpha-D-glucose 6-phosphate = beta-D-fructose 6-phosphate</text>
        <dbReference type="Rhea" id="RHEA:11816"/>
        <dbReference type="ChEBI" id="CHEBI:57634"/>
        <dbReference type="ChEBI" id="CHEBI:58225"/>
        <dbReference type="EC" id="5.3.1.9"/>
    </reaction>
</comment>
<comment type="pathway">
    <text evidence="1">Carbohydrate biosynthesis; gluconeogenesis.</text>
</comment>
<comment type="pathway">
    <text evidence="1">Carbohydrate degradation; glycolysis; D-glyceraldehyde 3-phosphate and glycerone phosphate from D-glucose: step 2/4.</text>
</comment>
<comment type="subcellular location">
    <subcellularLocation>
        <location evidence="1">Cytoplasm</location>
    </subcellularLocation>
</comment>
<comment type="similarity">
    <text evidence="1">Belongs to the GPI family.</text>
</comment>